<comment type="function">
    <text evidence="1">Involved in the aerobic and anaerobic degradation of long-chain fatty acids via beta-oxidation cycle. Catalyzes the formation of 3-oxoacyl-CoA from enoyl-CoA via L-3-hydroxyacyl-CoA. It can also use D-3-hydroxyacyl-CoA and cis-3-enoyl-CoA as substrate.</text>
</comment>
<comment type="catalytic activity">
    <reaction evidence="1">
        <text>a (3S)-3-hydroxyacyl-CoA + NAD(+) = a 3-oxoacyl-CoA + NADH + H(+)</text>
        <dbReference type="Rhea" id="RHEA:22432"/>
        <dbReference type="ChEBI" id="CHEBI:15378"/>
        <dbReference type="ChEBI" id="CHEBI:57318"/>
        <dbReference type="ChEBI" id="CHEBI:57540"/>
        <dbReference type="ChEBI" id="CHEBI:57945"/>
        <dbReference type="ChEBI" id="CHEBI:90726"/>
        <dbReference type="EC" id="1.1.1.35"/>
    </reaction>
</comment>
<comment type="catalytic activity">
    <reaction evidence="1">
        <text>a (3S)-3-hydroxyacyl-CoA = a (2E)-enoyl-CoA + H2O</text>
        <dbReference type="Rhea" id="RHEA:16105"/>
        <dbReference type="ChEBI" id="CHEBI:15377"/>
        <dbReference type="ChEBI" id="CHEBI:57318"/>
        <dbReference type="ChEBI" id="CHEBI:58856"/>
        <dbReference type="EC" id="4.2.1.17"/>
    </reaction>
</comment>
<comment type="catalytic activity">
    <reaction evidence="1">
        <text>a 4-saturated-(3S)-3-hydroxyacyl-CoA = a (3E)-enoyl-CoA + H2O</text>
        <dbReference type="Rhea" id="RHEA:20724"/>
        <dbReference type="ChEBI" id="CHEBI:15377"/>
        <dbReference type="ChEBI" id="CHEBI:58521"/>
        <dbReference type="ChEBI" id="CHEBI:137480"/>
        <dbReference type="EC" id="4.2.1.17"/>
    </reaction>
</comment>
<comment type="catalytic activity">
    <reaction evidence="1">
        <text>(3S)-3-hydroxybutanoyl-CoA = (3R)-3-hydroxybutanoyl-CoA</text>
        <dbReference type="Rhea" id="RHEA:21760"/>
        <dbReference type="ChEBI" id="CHEBI:57315"/>
        <dbReference type="ChEBI" id="CHEBI:57316"/>
        <dbReference type="EC" id="5.1.2.3"/>
    </reaction>
</comment>
<comment type="catalytic activity">
    <reaction evidence="1">
        <text>a (3Z)-enoyl-CoA = a 4-saturated (2E)-enoyl-CoA</text>
        <dbReference type="Rhea" id="RHEA:45900"/>
        <dbReference type="ChEBI" id="CHEBI:85097"/>
        <dbReference type="ChEBI" id="CHEBI:85489"/>
        <dbReference type="EC" id="5.3.3.8"/>
    </reaction>
</comment>
<comment type="catalytic activity">
    <reaction evidence="1">
        <text>a (3E)-enoyl-CoA = a 4-saturated (2E)-enoyl-CoA</text>
        <dbReference type="Rhea" id="RHEA:45228"/>
        <dbReference type="ChEBI" id="CHEBI:58521"/>
        <dbReference type="ChEBI" id="CHEBI:85097"/>
        <dbReference type="EC" id="5.3.3.8"/>
    </reaction>
</comment>
<comment type="pathway">
    <text evidence="1">Lipid metabolism; fatty acid beta-oxidation.</text>
</comment>
<comment type="subunit">
    <text evidence="1">Heterotetramer of two alpha chains (FadB) and two beta chains (FadA).</text>
</comment>
<comment type="similarity">
    <text evidence="1">In the N-terminal section; belongs to the enoyl-CoA hydratase/isomerase family.</text>
</comment>
<comment type="similarity">
    <text evidence="1">In the C-terminal section; belongs to the 3-hydroxyacyl-CoA dehydrogenase family.</text>
</comment>
<organism>
    <name type="scientific">Shewanella baltica (strain OS195)</name>
    <dbReference type="NCBI Taxonomy" id="399599"/>
    <lineage>
        <taxon>Bacteria</taxon>
        <taxon>Pseudomonadati</taxon>
        <taxon>Pseudomonadota</taxon>
        <taxon>Gammaproteobacteria</taxon>
        <taxon>Alteromonadales</taxon>
        <taxon>Shewanellaceae</taxon>
        <taxon>Shewanella</taxon>
    </lineage>
</organism>
<sequence>MIYQSPTIQVELLEDNIAKLCFNAPGSVNKFDRETLASLDAALDSIKQDSNIKALVLTSSKDTFIVGADITEFLGLFAQDDAVLLSWVEQANAVFNKLEDLPFPTASAIKGFALGGGCETILATDFRVADTTAKIGLPETKLGIIPGFGGTVRLPRVIGADNALEWITTGKDQRAEDALKVGAVDAVVAPQALEAAAIQMLKDAVAEKLDWQARRNRKLSALTLPKLEAMMSFTTAKGMVFAVAGKHYPAPMAAVSVIEQASTKGRAEALQIEHQAFIKLAKTDVAKALIGIFLNDQFVKGKAKKAGKLAKEVNNAAVLGAGIMGGGIAYQSASKGTPIVMKDIAQPALDLGLNEAAKLLSAQVARGRSTPEKMAKVLNNITPSLDYAAIKHSDVVVEAVVEHPKIKAQVLAEVEGYVSEDAIIASNTSTISINLLAKSMKKPERFCGMHFFNPVHKMPLVEVIRGEHSSEETIASVVAYASKMGKTPIVVNDCPGFFVNRVLFPYFAGFNGLLAEGGDFAAIDKVMEKQFGWPMGPAYLLDVVGLDTGHHAQAVMAEGFPDRMGKSGTDAIDVMFENKRLGQKNGKGFYVYSVDSRGKPKKDVDPTSYGLLKDAFGELKAFEADDIIARTMIPMIIETVRCLEEGIVASPAEADMGLVYGLGFPPFRGGVFRYLDTMGVANFVALADKYAHLGGLYQVTDAMRTLAANNGSYYQA</sequence>
<gene>
    <name evidence="1" type="primary">fadB</name>
    <name type="ordered locus">Sbal195_0020</name>
</gene>
<evidence type="ECO:0000255" key="1">
    <source>
        <dbReference type="HAMAP-Rule" id="MF_01621"/>
    </source>
</evidence>
<dbReference type="EC" id="4.2.1.17" evidence="1"/>
<dbReference type="EC" id="5.1.2.3" evidence="1"/>
<dbReference type="EC" id="5.3.3.8" evidence="1"/>
<dbReference type="EC" id="1.1.1.35" evidence="1"/>
<dbReference type="EMBL" id="CP000891">
    <property type="protein sequence ID" value="ABX47202.1"/>
    <property type="molecule type" value="Genomic_DNA"/>
</dbReference>
<dbReference type="RefSeq" id="WP_006084786.1">
    <property type="nucleotide sequence ID" value="NC_009997.1"/>
</dbReference>
<dbReference type="SMR" id="A9KU91"/>
<dbReference type="GeneID" id="11770390"/>
<dbReference type="KEGG" id="sbn:Sbal195_0020"/>
<dbReference type="HOGENOM" id="CLU_009834_16_3_6"/>
<dbReference type="UniPathway" id="UPA00659"/>
<dbReference type="Proteomes" id="UP000000770">
    <property type="component" value="Chromosome"/>
</dbReference>
<dbReference type="GO" id="GO:0036125">
    <property type="term" value="C:fatty acid beta-oxidation multienzyme complex"/>
    <property type="evidence" value="ECO:0007669"/>
    <property type="project" value="InterPro"/>
</dbReference>
<dbReference type="GO" id="GO:0008692">
    <property type="term" value="F:3-hydroxybutyryl-CoA epimerase activity"/>
    <property type="evidence" value="ECO:0007669"/>
    <property type="project" value="UniProtKB-UniRule"/>
</dbReference>
<dbReference type="GO" id="GO:0004165">
    <property type="term" value="F:delta(3)-delta(2)-enoyl-CoA isomerase activity"/>
    <property type="evidence" value="ECO:0007669"/>
    <property type="project" value="UniProtKB-UniRule"/>
</dbReference>
<dbReference type="GO" id="GO:0004300">
    <property type="term" value="F:enoyl-CoA hydratase activity"/>
    <property type="evidence" value="ECO:0007669"/>
    <property type="project" value="UniProtKB-UniRule"/>
</dbReference>
<dbReference type="GO" id="GO:0016509">
    <property type="term" value="F:long-chain-3-hydroxyacyl-CoA dehydrogenase activity"/>
    <property type="evidence" value="ECO:0007669"/>
    <property type="project" value="TreeGrafter"/>
</dbReference>
<dbReference type="GO" id="GO:0070403">
    <property type="term" value="F:NAD+ binding"/>
    <property type="evidence" value="ECO:0007669"/>
    <property type="project" value="InterPro"/>
</dbReference>
<dbReference type="GO" id="GO:0006635">
    <property type="term" value="P:fatty acid beta-oxidation"/>
    <property type="evidence" value="ECO:0007669"/>
    <property type="project" value="UniProtKB-UniRule"/>
</dbReference>
<dbReference type="CDD" id="cd06558">
    <property type="entry name" value="crotonase-like"/>
    <property type="match status" value="1"/>
</dbReference>
<dbReference type="FunFam" id="1.10.1040.50:FF:000001">
    <property type="entry name" value="Fatty acid oxidation complex subunit alpha"/>
    <property type="match status" value="1"/>
</dbReference>
<dbReference type="FunFam" id="3.40.50.720:FF:000009">
    <property type="entry name" value="Fatty oxidation complex, alpha subunit"/>
    <property type="match status" value="1"/>
</dbReference>
<dbReference type="Gene3D" id="1.10.1040.50">
    <property type="match status" value="1"/>
</dbReference>
<dbReference type="Gene3D" id="3.90.226.10">
    <property type="entry name" value="2-enoyl-CoA Hydratase, Chain A, domain 1"/>
    <property type="match status" value="1"/>
</dbReference>
<dbReference type="Gene3D" id="3.40.50.720">
    <property type="entry name" value="NAD(P)-binding Rossmann-like Domain"/>
    <property type="match status" value="1"/>
</dbReference>
<dbReference type="HAMAP" id="MF_01621">
    <property type="entry name" value="FadB"/>
    <property type="match status" value="1"/>
</dbReference>
<dbReference type="InterPro" id="IPR006180">
    <property type="entry name" value="3-OHacyl-CoA_DH_CS"/>
</dbReference>
<dbReference type="InterPro" id="IPR006176">
    <property type="entry name" value="3-OHacyl-CoA_DH_NAD-bd"/>
</dbReference>
<dbReference type="InterPro" id="IPR006108">
    <property type="entry name" value="3HC_DH_C"/>
</dbReference>
<dbReference type="InterPro" id="IPR008927">
    <property type="entry name" value="6-PGluconate_DH-like_C_sf"/>
</dbReference>
<dbReference type="InterPro" id="IPR029045">
    <property type="entry name" value="ClpP/crotonase-like_dom_sf"/>
</dbReference>
<dbReference type="InterPro" id="IPR001753">
    <property type="entry name" value="Enoyl-CoA_hydra/iso"/>
</dbReference>
<dbReference type="InterPro" id="IPR050136">
    <property type="entry name" value="FA_oxidation_alpha_subunit"/>
</dbReference>
<dbReference type="InterPro" id="IPR012799">
    <property type="entry name" value="FadB"/>
</dbReference>
<dbReference type="InterPro" id="IPR036291">
    <property type="entry name" value="NAD(P)-bd_dom_sf"/>
</dbReference>
<dbReference type="NCBIfam" id="TIGR02437">
    <property type="entry name" value="FadB"/>
    <property type="match status" value="1"/>
</dbReference>
<dbReference type="NCBIfam" id="NF008727">
    <property type="entry name" value="PRK11730.1"/>
    <property type="match status" value="1"/>
</dbReference>
<dbReference type="PANTHER" id="PTHR43612">
    <property type="entry name" value="TRIFUNCTIONAL ENZYME SUBUNIT ALPHA"/>
    <property type="match status" value="1"/>
</dbReference>
<dbReference type="PANTHER" id="PTHR43612:SF3">
    <property type="entry name" value="TRIFUNCTIONAL ENZYME SUBUNIT ALPHA, MITOCHONDRIAL"/>
    <property type="match status" value="1"/>
</dbReference>
<dbReference type="Pfam" id="PF00725">
    <property type="entry name" value="3HCDH"/>
    <property type="match status" value="1"/>
</dbReference>
<dbReference type="Pfam" id="PF02737">
    <property type="entry name" value="3HCDH_N"/>
    <property type="match status" value="1"/>
</dbReference>
<dbReference type="Pfam" id="PF00378">
    <property type="entry name" value="ECH_1"/>
    <property type="match status" value="1"/>
</dbReference>
<dbReference type="SUPFAM" id="SSF48179">
    <property type="entry name" value="6-phosphogluconate dehydrogenase C-terminal domain-like"/>
    <property type="match status" value="2"/>
</dbReference>
<dbReference type="SUPFAM" id="SSF52096">
    <property type="entry name" value="ClpP/crotonase"/>
    <property type="match status" value="1"/>
</dbReference>
<dbReference type="SUPFAM" id="SSF51735">
    <property type="entry name" value="NAD(P)-binding Rossmann-fold domains"/>
    <property type="match status" value="1"/>
</dbReference>
<dbReference type="PROSITE" id="PS00067">
    <property type="entry name" value="3HCDH"/>
    <property type="match status" value="1"/>
</dbReference>
<keyword id="KW-0276">Fatty acid metabolism</keyword>
<keyword id="KW-0413">Isomerase</keyword>
<keyword id="KW-0442">Lipid degradation</keyword>
<keyword id="KW-0443">Lipid metabolism</keyword>
<keyword id="KW-0456">Lyase</keyword>
<keyword id="KW-0511">Multifunctional enzyme</keyword>
<keyword id="KW-0520">NAD</keyword>
<keyword id="KW-0560">Oxidoreductase</keyword>
<name>FADB_SHEB9</name>
<feature type="chain" id="PRO_1000088082" description="Fatty acid oxidation complex subunit alpha">
    <location>
        <begin position="1"/>
        <end position="716"/>
    </location>
</feature>
<feature type="region of interest" description="Enoyl-CoA hydratase/isomerase" evidence="1">
    <location>
        <begin position="1"/>
        <end position="189"/>
    </location>
</feature>
<feature type="region of interest" description="3-hydroxyacyl-CoA dehydrogenase" evidence="1">
    <location>
        <begin position="311"/>
        <end position="716"/>
    </location>
</feature>
<feature type="active site" description="For 3-hydroxyacyl-CoA dehydrogenase activity" evidence="1">
    <location>
        <position position="450"/>
    </location>
</feature>
<feature type="binding site" evidence="1">
    <location>
        <position position="296"/>
    </location>
    <ligand>
        <name>substrate</name>
    </ligand>
</feature>
<feature type="binding site" evidence="1">
    <location>
        <position position="324"/>
    </location>
    <ligand>
        <name>NAD(+)</name>
        <dbReference type="ChEBI" id="CHEBI:57540"/>
    </ligand>
</feature>
<feature type="binding site" evidence="1">
    <location>
        <position position="343"/>
    </location>
    <ligand>
        <name>NAD(+)</name>
        <dbReference type="ChEBI" id="CHEBI:57540"/>
    </ligand>
</feature>
<feature type="binding site" evidence="1">
    <location>
        <begin position="400"/>
        <end position="402"/>
    </location>
    <ligand>
        <name>NAD(+)</name>
        <dbReference type="ChEBI" id="CHEBI:57540"/>
    </ligand>
</feature>
<feature type="binding site" evidence="1">
    <location>
        <position position="407"/>
    </location>
    <ligand>
        <name>NAD(+)</name>
        <dbReference type="ChEBI" id="CHEBI:57540"/>
    </ligand>
</feature>
<feature type="binding site" evidence="1">
    <location>
        <position position="429"/>
    </location>
    <ligand>
        <name>NAD(+)</name>
        <dbReference type="ChEBI" id="CHEBI:57540"/>
    </ligand>
</feature>
<feature type="binding site" evidence="1">
    <location>
        <position position="453"/>
    </location>
    <ligand>
        <name>NAD(+)</name>
        <dbReference type="ChEBI" id="CHEBI:57540"/>
    </ligand>
</feature>
<feature type="binding site" evidence="1">
    <location>
        <position position="500"/>
    </location>
    <ligand>
        <name>substrate</name>
    </ligand>
</feature>
<feature type="binding site" evidence="1">
    <location>
        <position position="660"/>
    </location>
    <ligand>
        <name>substrate</name>
    </ligand>
</feature>
<feature type="site" description="Important for catalytic activity" evidence="1">
    <location>
        <position position="119"/>
    </location>
</feature>
<feature type="site" description="Important for catalytic activity" evidence="1">
    <location>
        <position position="139"/>
    </location>
</feature>
<reference key="1">
    <citation type="submission" date="2007-11" db="EMBL/GenBank/DDBJ databases">
        <title>Complete sequence of chromosome of Shewanella baltica OS195.</title>
        <authorList>
            <consortium name="US DOE Joint Genome Institute"/>
            <person name="Copeland A."/>
            <person name="Lucas S."/>
            <person name="Lapidus A."/>
            <person name="Barry K."/>
            <person name="Glavina del Rio T."/>
            <person name="Dalin E."/>
            <person name="Tice H."/>
            <person name="Pitluck S."/>
            <person name="Chain P."/>
            <person name="Malfatti S."/>
            <person name="Shin M."/>
            <person name="Vergez L."/>
            <person name="Schmutz J."/>
            <person name="Larimer F."/>
            <person name="Land M."/>
            <person name="Hauser L."/>
            <person name="Kyrpides N."/>
            <person name="Kim E."/>
            <person name="Brettar I."/>
            <person name="Rodrigues J."/>
            <person name="Konstantinidis K."/>
            <person name="Klappenbach J."/>
            <person name="Hofle M."/>
            <person name="Tiedje J."/>
            <person name="Richardson P."/>
        </authorList>
    </citation>
    <scope>NUCLEOTIDE SEQUENCE [LARGE SCALE GENOMIC DNA]</scope>
    <source>
        <strain>OS195</strain>
    </source>
</reference>
<protein>
    <recommendedName>
        <fullName evidence="1">Fatty acid oxidation complex subunit alpha</fullName>
    </recommendedName>
    <domain>
        <recommendedName>
            <fullName evidence="1">Enoyl-CoA hydratase/Delta(3)-cis-Delta(2)-trans-enoyl-CoA isomerase/3-hydroxybutyryl-CoA epimerase</fullName>
            <ecNumber evidence="1">4.2.1.17</ecNumber>
            <ecNumber evidence="1">5.1.2.3</ecNumber>
            <ecNumber evidence="1">5.3.3.8</ecNumber>
        </recommendedName>
    </domain>
    <domain>
        <recommendedName>
            <fullName evidence="1">3-hydroxyacyl-CoA dehydrogenase</fullName>
            <ecNumber evidence="1">1.1.1.35</ecNumber>
        </recommendedName>
    </domain>
</protein>
<proteinExistence type="inferred from homology"/>
<accession>A9KU91</accession>